<protein>
    <recommendedName>
        <fullName evidence="1">Protoheme IX farnesyltransferase 1</fullName>
        <ecNumber evidence="1">2.5.1.141</ecNumber>
    </recommendedName>
    <alternativeName>
        <fullName evidence="1">Heme B farnesyltransferase 1</fullName>
    </alternativeName>
    <alternativeName>
        <fullName evidence="1">Heme O synthase 1</fullName>
    </alternativeName>
</protein>
<proteinExistence type="inferred from homology"/>
<name>CYOE1_PSEPK</name>
<sequence length="297" mass="32618">MATLLSVRRARWRDYLELTKPKVVVLMLITSLAGMFLATRAGVSWSVLLFGNLGIGLCAGGAAVVNHVVDRRIDALMARTHKRPLAQGRVEPLPALLFALALALLGMVLLLVFTNALTAWLTLASLLGYAVLYTGFLKRATPQNIVIGGLAGAAPPLLGWVAVSGHVSAEPLLLVLIIFAWTPPHFWALAIHRKEEYAKADIPMLPVTHGERYTKLHILLYTLILLAVSLLPYAIHMSGPLYLVCALALGLRFLQWAWVLYRSSRPHAAIGTFKYSIGYLFALFIALLLDHYLLLNL</sequence>
<gene>
    <name evidence="1" type="primary">cyoE1</name>
    <name type="synonym">cyoE-1</name>
    <name type="ordered locus">PP_0110</name>
</gene>
<feature type="chain" id="PRO_0000326927" description="Protoheme IX farnesyltransferase 1">
    <location>
        <begin position="1"/>
        <end position="297"/>
    </location>
</feature>
<feature type="transmembrane region" description="Helical" evidence="1">
    <location>
        <begin position="23"/>
        <end position="43"/>
    </location>
</feature>
<feature type="transmembrane region" description="Helical" evidence="1">
    <location>
        <begin position="45"/>
        <end position="65"/>
    </location>
</feature>
<feature type="transmembrane region" description="Helical" evidence="1">
    <location>
        <begin position="93"/>
        <end position="113"/>
    </location>
</feature>
<feature type="transmembrane region" description="Helical" evidence="1">
    <location>
        <begin position="117"/>
        <end position="137"/>
    </location>
</feature>
<feature type="transmembrane region" description="Helical" evidence="1">
    <location>
        <begin position="145"/>
        <end position="165"/>
    </location>
</feature>
<feature type="transmembrane region" description="Helical" evidence="1">
    <location>
        <begin position="171"/>
        <end position="191"/>
    </location>
</feature>
<feature type="transmembrane region" description="Helical" evidence="1">
    <location>
        <begin position="216"/>
        <end position="236"/>
    </location>
</feature>
<feature type="transmembrane region" description="Helical" evidence="1">
    <location>
        <begin position="241"/>
        <end position="261"/>
    </location>
</feature>
<feature type="transmembrane region" description="Helical" evidence="1">
    <location>
        <begin position="277"/>
        <end position="297"/>
    </location>
</feature>
<comment type="function">
    <text evidence="1">Converts heme B (protoheme IX) to heme O by substitution of the vinyl group on carbon 2 of heme B porphyrin ring with a hydroxyethyl farnesyl side group.</text>
</comment>
<comment type="catalytic activity">
    <reaction evidence="1">
        <text>heme b + (2E,6E)-farnesyl diphosphate + H2O = Fe(II)-heme o + diphosphate</text>
        <dbReference type="Rhea" id="RHEA:28070"/>
        <dbReference type="ChEBI" id="CHEBI:15377"/>
        <dbReference type="ChEBI" id="CHEBI:33019"/>
        <dbReference type="ChEBI" id="CHEBI:60344"/>
        <dbReference type="ChEBI" id="CHEBI:60530"/>
        <dbReference type="ChEBI" id="CHEBI:175763"/>
        <dbReference type="EC" id="2.5.1.141"/>
    </reaction>
</comment>
<comment type="pathway">
    <text evidence="1">Porphyrin-containing compound metabolism; heme O biosynthesis; heme O from protoheme: step 1/1.</text>
</comment>
<comment type="subcellular location">
    <subcellularLocation>
        <location evidence="1">Cell inner membrane</location>
        <topology evidence="1">Multi-pass membrane protein</topology>
    </subcellularLocation>
</comment>
<comment type="miscellaneous">
    <text evidence="1">Carbon 2 of the heme B porphyrin ring is defined according to the Fischer nomenclature.</text>
</comment>
<comment type="similarity">
    <text evidence="1">Belongs to the UbiA prenyltransferase family. Protoheme IX farnesyltransferase subfamily.</text>
</comment>
<reference key="1">
    <citation type="journal article" date="2002" name="Environ. Microbiol.">
        <title>Complete genome sequence and comparative analysis of the metabolically versatile Pseudomonas putida KT2440.</title>
        <authorList>
            <person name="Nelson K.E."/>
            <person name="Weinel C."/>
            <person name="Paulsen I.T."/>
            <person name="Dodson R.J."/>
            <person name="Hilbert H."/>
            <person name="Martins dos Santos V.A.P."/>
            <person name="Fouts D.E."/>
            <person name="Gill S.R."/>
            <person name="Pop M."/>
            <person name="Holmes M."/>
            <person name="Brinkac L.M."/>
            <person name="Beanan M.J."/>
            <person name="DeBoy R.T."/>
            <person name="Daugherty S.C."/>
            <person name="Kolonay J.F."/>
            <person name="Madupu R."/>
            <person name="Nelson W.C."/>
            <person name="White O."/>
            <person name="Peterson J.D."/>
            <person name="Khouri H.M."/>
            <person name="Hance I."/>
            <person name="Chris Lee P."/>
            <person name="Holtzapple E.K."/>
            <person name="Scanlan D."/>
            <person name="Tran K."/>
            <person name="Moazzez A."/>
            <person name="Utterback T.R."/>
            <person name="Rizzo M."/>
            <person name="Lee K."/>
            <person name="Kosack D."/>
            <person name="Moestl D."/>
            <person name="Wedler H."/>
            <person name="Lauber J."/>
            <person name="Stjepandic D."/>
            <person name="Hoheisel J."/>
            <person name="Straetz M."/>
            <person name="Heim S."/>
            <person name="Kiewitz C."/>
            <person name="Eisen J.A."/>
            <person name="Timmis K.N."/>
            <person name="Duesterhoeft A."/>
            <person name="Tuemmler B."/>
            <person name="Fraser C.M."/>
        </authorList>
    </citation>
    <scope>NUCLEOTIDE SEQUENCE [LARGE SCALE GENOMIC DNA]</scope>
    <source>
        <strain>ATCC 47054 / DSM 6125 / CFBP 8728 / NCIMB 11950 / KT2440</strain>
    </source>
</reference>
<keyword id="KW-0997">Cell inner membrane</keyword>
<keyword id="KW-1003">Cell membrane</keyword>
<keyword id="KW-0350">Heme biosynthesis</keyword>
<keyword id="KW-0472">Membrane</keyword>
<keyword id="KW-1185">Reference proteome</keyword>
<keyword id="KW-0808">Transferase</keyword>
<keyword id="KW-0812">Transmembrane</keyword>
<keyword id="KW-1133">Transmembrane helix</keyword>
<evidence type="ECO:0000255" key="1">
    <source>
        <dbReference type="HAMAP-Rule" id="MF_00154"/>
    </source>
</evidence>
<dbReference type="EC" id="2.5.1.141" evidence="1"/>
<dbReference type="EMBL" id="AE015451">
    <property type="protein sequence ID" value="AAN65744.1"/>
    <property type="molecule type" value="Genomic_DNA"/>
</dbReference>
<dbReference type="RefSeq" id="NP_742280.1">
    <property type="nucleotide sequence ID" value="NC_002947.4"/>
</dbReference>
<dbReference type="SMR" id="Q88RL9"/>
<dbReference type="STRING" id="160488.PP_0110"/>
<dbReference type="PaxDb" id="160488-PP_0110"/>
<dbReference type="KEGG" id="ppu:PP_0110"/>
<dbReference type="PATRIC" id="fig|160488.4.peg.112"/>
<dbReference type="eggNOG" id="COG0109">
    <property type="taxonomic scope" value="Bacteria"/>
</dbReference>
<dbReference type="HOGENOM" id="CLU_029631_0_2_6"/>
<dbReference type="OrthoDB" id="9814417at2"/>
<dbReference type="PhylomeDB" id="Q88RL9"/>
<dbReference type="BioCyc" id="PPUT160488:G1G01-115-MONOMER"/>
<dbReference type="UniPathway" id="UPA00834">
    <property type="reaction ID" value="UER00712"/>
</dbReference>
<dbReference type="Proteomes" id="UP000000556">
    <property type="component" value="Chromosome"/>
</dbReference>
<dbReference type="GO" id="GO:0005886">
    <property type="term" value="C:plasma membrane"/>
    <property type="evidence" value="ECO:0007669"/>
    <property type="project" value="UniProtKB-SubCell"/>
</dbReference>
<dbReference type="GO" id="GO:0008495">
    <property type="term" value="F:protoheme IX farnesyltransferase activity"/>
    <property type="evidence" value="ECO:0007669"/>
    <property type="project" value="UniProtKB-UniRule"/>
</dbReference>
<dbReference type="GO" id="GO:0048034">
    <property type="term" value="P:heme O biosynthetic process"/>
    <property type="evidence" value="ECO:0007669"/>
    <property type="project" value="UniProtKB-UniRule"/>
</dbReference>
<dbReference type="CDD" id="cd13957">
    <property type="entry name" value="PT_UbiA_Cox10"/>
    <property type="match status" value="1"/>
</dbReference>
<dbReference type="FunFam" id="1.10.357.140:FF:000001">
    <property type="entry name" value="Protoheme IX farnesyltransferase"/>
    <property type="match status" value="1"/>
</dbReference>
<dbReference type="Gene3D" id="1.10.357.140">
    <property type="entry name" value="UbiA prenyltransferase"/>
    <property type="match status" value="1"/>
</dbReference>
<dbReference type="HAMAP" id="MF_00154">
    <property type="entry name" value="CyoE_CtaB"/>
    <property type="match status" value="1"/>
</dbReference>
<dbReference type="InterPro" id="IPR006369">
    <property type="entry name" value="Protohaem_IX_farnesylTrfase"/>
</dbReference>
<dbReference type="InterPro" id="IPR000537">
    <property type="entry name" value="UbiA_prenyltransferase"/>
</dbReference>
<dbReference type="InterPro" id="IPR030470">
    <property type="entry name" value="UbiA_prenylTrfase_CS"/>
</dbReference>
<dbReference type="InterPro" id="IPR044878">
    <property type="entry name" value="UbiA_sf"/>
</dbReference>
<dbReference type="NCBIfam" id="TIGR01473">
    <property type="entry name" value="cyoE_ctaB"/>
    <property type="match status" value="1"/>
</dbReference>
<dbReference type="NCBIfam" id="NF003349">
    <property type="entry name" value="PRK04375.1-2"/>
    <property type="match status" value="1"/>
</dbReference>
<dbReference type="PANTHER" id="PTHR43448:SF7">
    <property type="entry name" value="4-HYDROXYBENZOATE SOLANESYLTRANSFERASE"/>
    <property type="match status" value="1"/>
</dbReference>
<dbReference type="PANTHER" id="PTHR43448">
    <property type="entry name" value="PROTOHEME IX FARNESYLTRANSFERASE, MITOCHONDRIAL"/>
    <property type="match status" value="1"/>
</dbReference>
<dbReference type="Pfam" id="PF01040">
    <property type="entry name" value="UbiA"/>
    <property type="match status" value="1"/>
</dbReference>
<dbReference type="PROSITE" id="PS00943">
    <property type="entry name" value="UBIA"/>
    <property type="match status" value="1"/>
</dbReference>
<organism>
    <name type="scientific">Pseudomonas putida (strain ATCC 47054 / DSM 6125 / CFBP 8728 / NCIMB 11950 / KT2440)</name>
    <dbReference type="NCBI Taxonomy" id="160488"/>
    <lineage>
        <taxon>Bacteria</taxon>
        <taxon>Pseudomonadati</taxon>
        <taxon>Pseudomonadota</taxon>
        <taxon>Gammaproteobacteria</taxon>
        <taxon>Pseudomonadales</taxon>
        <taxon>Pseudomonadaceae</taxon>
        <taxon>Pseudomonas</taxon>
    </lineage>
</organism>
<accession>Q88RL9</accession>